<organism>
    <name type="scientific">Populus tremula</name>
    <name type="common">European aspen</name>
    <dbReference type="NCBI Taxonomy" id="113636"/>
    <lineage>
        <taxon>Eukaryota</taxon>
        <taxon>Viridiplantae</taxon>
        <taxon>Streptophyta</taxon>
        <taxon>Embryophyta</taxon>
        <taxon>Tracheophyta</taxon>
        <taxon>Spermatophyta</taxon>
        <taxon>Magnoliopsida</taxon>
        <taxon>eudicotyledons</taxon>
        <taxon>Gunneridae</taxon>
        <taxon>Pentapetalae</taxon>
        <taxon>rosids</taxon>
        <taxon>fabids</taxon>
        <taxon>Malpighiales</taxon>
        <taxon>Salicaceae</taxon>
        <taxon>Saliceae</taxon>
        <taxon>Populus</taxon>
    </lineage>
</organism>
<feature type="chain" id="PRO_0000147805" description="Phosphoglucomutase, cytoplasmic">
    <location>
        <begin position="1"/>
        <end position="582"/>
    </location>
</feature>
<feature type="active site" description="Phosphoserine intermediate" evidence="1">
    <location>
        <position position="124"/>
    </location>
</feature>
<feature type="binding site" evidence="1">
    <location>
        <position position="25"/>
    </location>
    <ligand>
        <name>alpha-D-glucose 1,6-bisphosphate</name>
        <dbReference type="ChEBI" id="CHEBI:58392"/>
    </ligand>
</feature>
<feature type="binding site" evidence="1">
    <location>
        <position position="124"/>
    </location>
    <ligand>
        <name>alpha-D-glucose 1,6-bisphosphate</name>
        <dbReference type="ChEBI" id="CHEBI:58392"/>
    </ligand>
</feature>
<feature type="binding site" description="via phosphate group" evidence="1">
    <location>
        <position position="124"/>
    </location>
    <ligand>
        <name>Mg(2+)</name>
        <dbReference type="ChEBI" id="CHEBI:18420"/>
    </ligand>
</feature>
<feature type="binding site" evidence="1">
    <location>
        <position position="299"/>
    </location>
    <ligand>
        <name>Mg(2+)</name>
        <dbReference type="ChEBI" id="CHEBI:18420"/>
    </ligand>
</feature>
<feature type="binding site" evidence="1">
    <location>
        <position position="301"/>
    </location>
    <ligand>
        <name>Mg(2+)</name>
        <dbReference type="ChEBI" id="CHEBI:18420"/>
    </ligand>
</feature>
<feature type="binding site" evidence="1">
    <location>
        <position position="303"/>
    </location>
    <ligand>
        <name>alpha-D-glucose 1,6-bisphosphate</name>
        <dbReference type="ChEBI" id="CHEBI:58392"/>
    </ligand>
</feature>
<feature type="binding site" evidence="1">
    <location>
        <position position="303"/>
    </location>
    <ligand>
        <name>Mg(2+)</name>
        <dbReference type="ChEBI" id="CHEBI:18420"/>
    </ligand>
</feature>
<feature type="binding site" evidence="1">
    <location>
        <position position="304"/>
    </location>
    <ligand>
        <name>alpha-D-glucose 1,6-bisphosphate</name>
        <dbReference type="ChEBI" id="CHEBI:58392"/>
    </ligand>
</feature>
<feature type="binding site" evidence="1">
    <location>
        <position position="367"/>
    </location>
    <ligand>
        <name>alpha-D-glucose 1,6-bisphosphate</name>
        <dbReference type="ChEBI" id="CHEBI:58392"/>
    </ligand>
</feature>
<feature type="binding site" evidence="1">
    <location>
        <position position="386"/>
    </location>
    <ligand>
        <name>alpha-D-glucose 1,6-bisphosphate</name>
        <dbReference type="ChEBI" id="CHEBI:58392"/>
    </ligand>
</feature>
<feature type="binding site" evidence="1">
    <location>
        <position position="388"/>
    </location>
    <ligand>
        <name>alpha-D-glucose 1,6-bisphosphate</name>
        <dbReference type="ChEBI" id="CHEBI:58392"/>
    </ligand>
</feature>
<feature type="binding site" evidence="1">
    <location>
        <position position="399"/>
    </location>
    <ligand>
        <name>alpha-D-glucose 1,6-bisphosphate</name>
        <dbReference type="ChEBI" id="CHEBI:58392"/>
    </ligand>
</feature>
<feature type="modified residue" description="Phosphoserine" evidence="1">
    <location>
        <position position="124"/>
    </location>
</feature>
<keyword id="KW-0119">Carbohydrate metabolism</keyword>
<keyword id="KW-0963">Cytoplasm</keyword>
<keyword id="KW-0313">Glucose metabolism</keyword>
<keyword id="KW-0413">Isomerase</keyword>
<keyword id="KW-0460">Magnesium</keyword>
<keyword id="KW-0479">Metal-binding</keyword>
<keyword id="KW-0597">Phosphoprotein</keyword>
<accession>Q9ZSQ4</accession>
<protein>
    <recommendedName>
        <fullName>Phosphoglucomutase, cytoplasmic</fullName>
        <shortName>PGM</shortName>
        <ecNumber evidence="3">5.4.2.2</ecNumber>
    </recommendedName>
    <alternativeName>
        <fullName>Glucose phosphomutase</fullName>
    </alternativeName>
</protein>
<evidence type="ECO:0000250" key="1">
    <source>
        <dbReference type="UniProtKB" id="P00949"/>
    </source>
</evidence>
<evidence type="ECO:0000250" key="2">
    <source>
        <dbReference type="UniProtKB" id="P36871"/>
    </source>
</evidence>
<evidence type="ECO:0000250" key="3">
    <source>
        <dbReference type="UniProtKB" id="P93804"/>
    </source>
</evidence>
<evidence type="ECO:0000305" key="4"/>
<dbReference type="EC" id="5.4.2.2" evidence="3"/>
<dbReference type="EMBL" id="AF097938">
    <property type="protein sequence ID" value="AAD13031.1"/>
    <property type="molecule type" value="mRNA"/>
</dbReference>
<dbReference type="GO" id="GO:0005829">
    <property type="term" value="C:cytosol"/>
    <property type="evidence" value="ECO:0007669"/>
    <property type="project" value="TreeGrafter"/>
</dbReference>
<dbReference type="GO" id="GO:0000287">
    <property type="term" value="F:magnesium ion binding"/>
    <property type="evidence" value="ECO:0007669"/>
    <property type="project" value="InterPro"/>
</dbReference>
<dbReference type="GO" id="GO:0004614">
    <property type="term" value="F:phosphoglucomutase activity"/>
    <property type="evidence" value="ECO:0007669"/>
    <property type="project" value="UniProtKB-EC"/>
</dbReference>
<dbReference type="GO" id="GO:0006006">
    <property type="term" value="P:glucose metabolic process"/>
    <property type="evidence" value="ECO:0007669"/>
    <property type="project" value="UniProtKB-KW"/>
</dbReference>
<dbReference type="CDD" id="cd03085">
    <property type="entry name" value="PGM1"/>
    <property type="match status" value="1"/>
</dbReference>
<dbReference type="FunFam" id="3.30.310.50:FF:000002">
    <property type="entry name" value="Phosphoglucomutase 5"/>
    <property type="match status" value="1"/>
</dbReference>
<dbReference type="FunFam" id="3.40.120.10:FF:000004">
    <property type="entry name" value="Phosphoglucomutase 5"/>
    <property type="match status" value="1"/>
</dbReference>
<dbReference type="FunFam" id="3.40.120.10:FF:000005">
    <property type="entry name" value="Phosphoglucomutase 5"/>
    <property type="match status" value="1"/>
</dbReference>
<dbReference type="FunFam" id="3.40.120.10:FF:000009">
    <property type="entry name" value="Phosphoglucomutase, cytoplasmic 1"/>
    <property type="match status" value="1"/>
</dbReference>
<dbReference type="Gene3D" id="3.40.120.10">
    <property type="entry name" value="Alpha-D-Glucose-1,6-Bisphosphate, subunit A, domain 3"/>
    <property type="match status" value="3"/>
</dbReference>
<dbReference type="Gene3D" id="3.30.310.50">
    <property type="entry name" value="Alpha-D-phosphohexomutase, C-terminal domain"/>
    <property type="match status" value="1"/>
</dbReference>
<dbReference type="InterPro" id="IPR005844">
    <property type="entry name" value="A-D-PHexomutase_a/b/a-I"/>
</dbReference>
<dbReference type="InterPro" id="IPR016055">
    <property type="entry name" value="A-D-PHexomutase_a/b/a-I/II/III"/>
</dbReference>
<dbReference type="InterPro" id="IPR005845">
    <property type="entry name" value="A-D-PHexomutase_a/b/a-II"/>
</dbReference>
<dbReference type="InterPro" id="IPR005846">
    <property type="entry name" value="A-D-PHexomutase_a/b/a-III"/>
</dbReference>
<dbReference type="InterPro" id="IPR036900">
    <property type="entry name" value="A-D-PHexomutase_C_sf"/>
</dbReference>
<dbReference type="InterPro" id="IPR016066">
    <property type="entry name" value="A-D-PHexomutase_CS"/>
</dbReference>
<dbReference type="InterPro" id="IPR005841">
    <property type="entry name" value="Alpha-D-phosphohexomutase_SF"/>
</dbReference>
<dbReference type="InterPro" id="IPR045244">
    <property type="entry name" value="PGM"/>
</dbReference>
<dbReference type="NCBIfam" id="NF005737">
    <property type="entry name" value="PRK07564.1-1"/>
    <property type="match status" value="1"/>
</dbReference>
<dbReference type="PANTHER" id="PTHR22573:SF2">
    <property type="entry name" value="PHOSPHOGLUCOMUTASE"/>
    <property type="match status" value="1"/>
</dbReference>
<dbReference type="PANTHER" id="PTHR22573">
    <property type="entry name" value="PHOSPHOHEXOMUTASE FAMILY MEMBER"/>
    <property type="match status" value="1"/>
</dbReference>
<dbReference type="Pfam" id="PF24947">
    <property type="entry name" value="PGM1_C_vert_fung"/>
    <property type="match status" value="1"/>
</dbReference>
<dbReference type="Pfam" id="PF02878">
    <property type="entry name" value="PGM_PMM_I"/>
    <property type="match status" value="1"/>
</dbReference>
<dbReference type="Pfam" id="PF02879">
    <property type="entry name" value="PGM_PMM_II"/>
    <property type="match status" value="1"/>
</dbReference>
<dbReference type="Pfam" id="PF02880">
    <property type="entry name" value="PGM_PMM_III"/>
    <property type="match status" value="1"/>
</dbReference>
<dbReference type="PRINTS" id="PR00509">
    <property type="entry name" value="PGMPMM"/>
</dbReference>
<dbReference type="SUPFAM" id="SSF55957">
    <property type="entry name" value="Phosphoglucomutase, C-terminal domain"/>
    <property type="match status" value="1"/>
</dbReference>
<dbReference type="SUPFAM" id="SSF53738">
    <property type="entry name" value="Phosphoglucomutase, first 3 domains"/>
    <property type="match status" value="3"/>
</dbReference>
<dbReference type="PROSITE" id="PS00710">
    <property type="entry name" value="PGM_PMM"/>
    <property type="match status" value="1"/>
</dbReference>
<proteinExistence type="evidence at transcript level"/>
<sequence>MVLFNVSRVETTPFGDQKPGTSGLRKKVKVFKQPNYLQNFVQSTFNALTPQNVRGATLVVSGDGRYFSKDAIQIITKMAAGNGLRRVWVGQNGLLSTPAVSAVIRERVGVDGSKATGAFILTASHNPGGPNEDFGIKYNMENGGPAPEGITDKIYENTKTIKEYLTADLPDVDITTIGVTSFSGSEGQFDVEVFDSASDYIKLMKSIFDFESIRKLLSSPKFTFCYDALHGVAGAYAKRIFVEELGAQESSLLNCVPKEDFGGGHPDPNLTYAKELVARMGLGKSNSEVEPPEFGAAADGDADRNMVLGKRFFVTPSDSVAIIAANAVEAIPYFSAGLKGVARSMPTSAALDVVAKSLNLKFFEVPTGWKFFGNLMDAGLCSVCGEESFGTGSDHIREKDGIWAVLAWLSILAYKNRENLGGGKLVTVEDIVHNHWATYGRHYYTRYDYENVDAGAAKELMACLVKLQSSLTEVNEIVSGIQSDVSKVVHADEFEYKDPVDGSISKHQGIRYLFEDGSRLVFRLSGTGSEGATIRLYIEQYEKDPSKTGRDSQDALAPLVAVALGLXKMQEFTGRSAPTVIT</sequence>
<comment type="function">
    <text evidence="2 3">Catalyzes the reversible isomerization of alpha-D-glucose 1-phosphate to alpha-D-glucose 6-phosphate (By similarity). The mechanism proceeds via the intermediate compound alpha-D-glucose 1,6-bisphosphate (By similarity). This enzyme participates in both the breakdown and synthesis of glucose (By similarity).</text>
</comment>
<comment type="catalytic activity">
    <reaction evidence="3">
        <text>alpha-D-glucose 1-phosphate = alpha-D-glucose 6-phosphate</text>
        <dbReference type="Rhea" id="RHEA:23536"/>
        <dbReference type="ChEBI" id="CHEBI:58225"/>
        <dbReference type="ChEBI" id="CHEBI:58601"/>
        <dbReference type="EC" id="5.4.2.2"/>
    </reaction>
</comment>
<comment type="catalytic activity">
    <reaction evidence="3">
        <text>O-phospho-L-seryl-[protein] + alpha-D-glucose 1-phosphate = alpha-D-glucose 1,6-bisphosphate + L-seryl-[protein]</text>
        <dbReference type="Rhea" id="RHEA:68748"/>
        <dbReference type="Rhea" id="RHEA-COMP:9863"/>
        <dbReference type="Rhea" id="RHEA-COMP:11604"/>
        <dbReference type="ChEBI" id="CHEBI:29999"/>
        <dbReference type="ChEBI" id="CHEBI:58392"/>
        <dbReference type="ChEBI" id="CHEBI:58601"/>
        <dbReference type="ChEBI" id="CHEBI:83421"/>
    </reaction>
</comment>
<comment type="catalytic activity">
    <reaction evidence="3">
        <text>alpha-D-glucose 1,6-bisphosphate + L-seryl-[protein] = O-phospho-L-seryl-[protein] + alpha-D-glucose 6-phosphate</text>
        <dbReference type="Rhea" id="RHEA:68752"/>
        <dbReference type="Rhea" id="RHEA-COMP:9863"/>
        <dbReference type="Rhea" id="RHEA-COMP:11604"/>
        <dbReference type="ChEBI" id="CHEBI:29999"/>
        <dbReference type="ChEBI" id="CHEBI:58225"/>
        <dbReference type="ChEBI" id="CHEBI:58392"/>
        <dbReference type="ChEBI" id="CHEBI:83421"/>
    </reaction>
</comment>
<comment type="cofactor">
    <cofactor evidence="1">
        <name>Mg(2+)</name>
        <dbReference type="ChEBI" id="CHEBI:18420"/>
    </cofactor>
    <text evidence="1">Binds 1 Mg(2+) ion per subunit.</text>
</comment>
<comment type="subunit">
    <text evidence="1">Monomer.</text>
</comment>
<comment type="subcellular location">
    <subcellularLocation>
        <location evidence="3">Cytoplasm</location>
    </subcellularLocation>
</comment>
<comment type="similarity">
    <text evidence="4">Belongs to the phosphohexose mutase family.</text>
</comment>
<name>PGMC_POPTN</name>
<reference key="1">
    <citation type="online journal article" date="1998" name="Plant Gene Register">
        <title>Molecular cloning of a cDNA encoding a cytosolic form of phosphoglucomutase from cambium of poplar (Populus tremula x tremuloides).</title>
        <authorList>
            <person name="Sterky F."/>
            <person name="Sievertzon M."/>
            <person name="Kleczkowski L.A."/>
        </authorList>
        <locator>PGR98-205</locator>
    </citation>
    <scope>NUCLEOTIDE SEQUENCE [MRNA]</scope>
    <source>
        <tissue>Cambium</tissue>
    </source>
</reference>
<gene>
    <name type="primary">PGM1</name>
    <name type="synonym">PGM</name>
</gene>